<reference key="1">
    <citation type="journal article" date="1993" name="J. Bacteriol.">
        <title>The Rhizobium meliloti rhizopine mos locus is a mosaic structure facilitating its symbiotic regulation.</title>
        <authorList>
            <person name="Murphy P.J."/>
            <person name="Trenz S.P."/>
            <person name="Grzemski W."/>
            <person name="de Bruijn F.J."/>
            <person name="Schell J."/>
        </authorList>
    </citation>
    <scope>NUCLEOTIDE SEQUENCE [GENOMIC DNA]</scope>
    <source>
        <strain>L5-30</strain>
    </source>
</reference>
<reference key="2">
    <citation type="journal article" date="1995" name="Microbiology">
        <title>Rhizobium meliloti lacking mosA synthesizes the rhizopine scyllo-inosamine in place of 3-O-methyl-scyllo-inosamine.</title>
        <authorList>
            <person name="Rao J.P."/>
            <person name="Grzemski W."/>
            <person name="Murphy P.J."/>
        </authorList>
    </citation>
    <scope>NUCLEOTIDE SEQUENCE [GENOMIC DNA]</scope>
    <source>
        <strain>RM220-3</strain>
    </source>
</reference>
<gene>
    <name type="primary">mosB</name>
</gene>
<evidence type="ECO:0000250" key="1"/>
<evidence type="ECO:0000255" key="2"/>
<evidence type="ECO:0000305" key="3"/>
<keyword id="KW-0238">DNA-binding</keyword>
<keyword id="KW-0663">Pyridoxal phosphate</keyword>
<keyword id="KW-0804">Transcription</keyword>
<keyword id="KW-0805">Transcription regulation</keyword>
<keyword id="KW-0902">Two-component regulatory system</keyword>
<dbReference type="EMBL" id="L17071">
    <property type="protein sequence ID" value="AAA26302.1"/>
    <property type="molecule type" value="Genomic_DNA"/>
</dbReference>
<dbReference type="EMBL" id="U23753">
    <property type="protein sequence ID" value="AAA91313.1"/>
    <property type="molecule type" value="Genomic_DNA"/>
</dbReference>
<dbReference type="PIR" id="C53308">
    <property type="entry name" value="C53308"/>
</dbReference>
<dbReference type="RefSeq" id="WP_046066574.1">
    <property type="nucleotide sequence ID" value="NZ_JZXD01000015.1"/>
</dbReference>
<dbReference type="SMR" id="Q07608"/>
<dbReference type="PATRIC" id="fig|382.53.peg.1543"/>
<dbReference type="GO" id="GO:0003677">
    <property type="term" value="F:DNA binding"/>
    <property type="evidence" value="ECO:0007669"/>
    <property type="project" value="UniProtKB-KW"/>
</dbReference>
<dbReference type="GO" id="GO:0030170">
    <property type="term" value="F:pyridoxal phosphate binding"/>
    <property type="evidence" value="ECO:0007669"/>
    <property type="project" value="TreeGrafter"/>
</dbReference>
<dbReference type="GO" id="GO:0008483">
    <property type="term" value="F:transaminase activity"/>
    <property type="evidence" value="ECO:0007669"/>
    <property type="project" value="TreeGrafter"/>
</dbReference>
<dbReference type="GO" id="GO:0009399">
    <property type="term" value="P:nitrogen fixation"/>
    <property type="evidence" value="ECO:0007669"/>
    <property type="project" value="InterPro"/>
</dbReference>
<dbReference type="GO" id="GO:0000160">
    <property type="term" value="P:phosphorelay signal transduction system"/>
    <property type="evidence" value="ECO:0007669"/>
    <property type="project" value="UniProtKB-KW"/>
</dbReference>
<dbReference type="GO" id="GO:0000271">
    <property type="term" value="P:polysaccharide biosynthetic process"/>
    <property type="evidence" value="ECO:0007669"/>
    <property type="project" value="TreeGrafter"/>
</dbReference>
<dbReference type="CDD" id="cd00616">
    <property type="entry name" value="AHBA_syn"/>
    <property type="match status" value="1"/>
</dbReference>
<dbReference type="Gene3D" id="3.90.1150.10">
    <property type="entry name" value="Aspartate Aminotransferase, domain 1"/>
    <property type="match status" value="1"/>
</dbReference>
<dbReference type="Gene3D" id="2.40.50.240">
    <property type="entry name" value="NifT/FixU-like"/>
    <property type="match status" value="1"/>
</dbReference>
<dbReference type="Gene3D" id="3.40.640.10">
    <property type="entry name" value="Type I PLP-dependent aspartate aminotransferase-like (Major domain)"/>
    <property type="match status" value="1"/>
</dbReference>
<dbReference type="InterPro" id="IPR000653">
    <property type="entry name" value="DegT/StrS_aminotransferase"/>
</dbReference>
<dbReference type="InterPro" id="IPR009727">
    <property type="entry name" value="NifT"/>
</dbReference>
<dbReference type="InterPro" id="IPR024044">
    <property type="entry name" value="NifT/FixU_barrel-like_dom_sf"/>
</dbReference>
<dbReference type="InterPro" id="IPR015424">
    <property type="entry name" value="PyrdxlP-dep_Trfase"/>
</dbReference>
<dbReference type="InterPro" id="IPR015421">
    <property type="entry name" value="PyrdxlP-dep_Trfase_major"/>
</dbReference>
<dbReference type="InterPro" id="IPR015422">
    <property type="entry name" value="PyrdxlP-dep_Trfase_small"/>
</dbReference>
<dbReference type="NCBIfam" id="TIGR02934">
    <property type="entry name" value="nifT_nitrog"/>
    <property type="match status" value="1"/>
</dbReference>
<dbReference type="PANTHER" id="PTHR30244:SF34">
    <property type="entry name" value="DTDP-4-AMINO-4,6-DIDEOXYGALACTOSE TRANSAMINASE"/>
    <property type="match status" value="1"/>
</dbReference>
<dbReference type="PANTHER" id="PTHR30244">
    <property type="entry name" value="TRANSAMINASE"/>
    <property type="match status" value="1"/>
</dbReference>
<dbReference type="Pfam" id="PF01041">
    <property type="entry name" value="DegT_DnrJ_EryC1"/>
    <property type="match status" value="1"/>
</dbReference>
<dbReference type="Pfam" id="PF06988">
    <property type="entry name" value="NifT"/>
    <property type="match status" value="1"/>
</dbReference>
<dbReference type="SUPFAM" id="SSF159203">
    <property type="entry name" value="NifT/FixU-like"/>
    <property type="match status" value="1"/>
</dbReference>
<dbReference type="SUPFAM" id="SSF53383">
    <property type="entry name" value="PLP-dependent transferases"/>
    <property type="match status" value="1"/>
</dbReference>
<comment type="function">
    <text>Involved in the biosynthesis of the rhizopine 3-O-methyl-scyllo-inosamine. May have a regulatory role in controlling the housekeeping genes within the nodule which are involved in the biosynthesis of the rhizopine backbone.</text>
</comment>
<comment type="similarity">
    <text evidence="3">Belongs to the DegT/DnrJ/EryC1 family.</text>
</comment>
<proteinExistence type="inferred from homology"/>
<accession>Q07608</accession>
<accession>Q52890</accession>
<sequence>MKVTIRINGDVLSAYIPKKDLEEPIISVANEDLWGGSILLRNGWRLALPHLPQEARLPVTVEARRMFGRLDRGAHEKPDRMTRIGEISSSQDAAAMLAENQKMHPWPALTRTAYEDVAACISSGELSGSGLGIINAFERRMEEWIGGGYVVSASSGTAALTVALIALGIQPGDVVLLPSYTWAATALAPLLIGAIPRFVDIDPNSYNISPTALAAAITPDVKAIIVVHMHGISCDMDEIICHAREQGIAVIEDCAQAHGALYKGQHVGLLSDIGCFSMQKSKHLSAGDGGFMVTRDPTLAQKMRDICNFGLPTPKANYRFDEVVRDGYAVFRECEQIGGMFRLQPMSAALVMHQLEHLRQRIAWLQTAMEPLVEESAKIPFFKITRSHVDRTHVWHKIRVGIDYAAVDYFGRSMAEIRRGLRNSLAERGISSTLWTAPILPLQTAFRPYAGVVEWTKSAGHLAIENSFIVFDENYPLIAQEPAKMAELVVKLQQAWDEHFTSLARGK</sequence>
<name>MOSB_RHIML</name>
<organism>
    <name type="scientific">Rhizobium meliloti</name>
    <name type="common">Ensifer meliloti</name>
    <name type="synonym">Sinorhizobium meliloti</name>
    <dbReference type="NCBI Taxonomy" id="382"/>
    <lineage>
        <taxon>Bacteria</taxon>
        <taxon>Pseudomonadati</taxon>
        <taxon>Pseudomonadota</taxon>
        <taxon>Alphaproteobacteria</taxon>
        <taxon>Hyphomicrobiales</taxon>
        <taxon>Rhizobiaceae</taxon>
        <taxon>Sinorhizobium/Ensifer group</taxon>
        <taxon>Sinorhizobium</taxon>
    </lineage>
</organism>
<feature type="chain" id="PRO_0000110013" description="Protein MosB">
    <location>
        <begin position="1"/>
        <end position="507"/>
    </location>
</feature>
<feature type="DNA-binding region" description="H-T-H motif" evidence="2">
    <location>
        <begin position="256"/>
        <end position="275"/>
    </location>
</feature>
<feature type="modified residue" description="N6-(pyridoxal phosphate)lysine" evidence="1">
    <location>
        <position position="282"/>
    </location>
</feature>
<feature type="sequence variant" description="In strain: RM220-3.">
    <original>ANED</original>
    <variation>EDEA</variation>
    <location>
        <begin position="29"/>
        <end position="32"/>
    </location>
</feature>
<feature type="sequence variant" description="In strain: RM220-3.">
    <original>E</original>
    <variation>D</variation>
    <location>
        <position position="54"/>
    </location>
</feature>
<feature type="sequence variant" description="In strain: RM220-3.">
    <original>F</original>
    <variation>S</variation>
    <location>
        <position position="67"/>
    </location>
</feature>
<feature type="sequence variant" description="In strain: RM220-3.">
    <original>A</original>
    <variation>P</variation>
    <location>
        <position position="74"/>
    </location>
</feature>
<feature type="sequence variant" description="In strain: RM220-3.">
    <original>D</original>
    <variation>N</variation>
    <location>
        <position position="92"/>
    </location>
</feature>
<protein>
    <recommendedName>
        <fullName>Protein MosB</fullName>
    </recommendedName>
</protein>